<sequence length="188" mass="19838">MSFSPASSEPHDAPAAAGSSVPASRSIAERWKMEAAPIRARLLLRAFAWLFSLLALVVMATDVHGRGGAQDFSTYPEYNYCLGMSIIALLYATAQLVRDAHRLSSGRDLVAGRKAAAVVDFAGDQVVAYSLISGLSAAAPVTDYMRQATDNLFNDSAAAAISLAFFAFLAISLSALISGYNLSLEAIV</sequence>
<feature type="chain" id="PRO_0000417768" description="CASP-like protein 4B3">
    <location>
        <begin position="1"/>
        <end position="188"/>
    </location>
</feature>
<feature type="topological domain" description="Cytoplasmic" evidence="2">
    <location>
        <begin position="1"/>
        <end position="42"/>
    </location>
</feature>
<feature type="transmembrane region" description="Helical" evidence="2">
    <location>
        <begin position="43"/>
        <end position="63"/>
    </location>
</feature>
<feature type="topological domain" description="Extracellular" evidence="2">
    <location>
        <begin position="64"/>
        <end position="76"/>
    </location>
</feature>
<feature type="transmembrane region" description="Helical" evidence="2">
    <location>
        <begin position="77"/>
        <end position="97"/>
    </location>
</feature>
<feature type="topological domain" description="Cytoplasmic" evidence="2">
    <location>
        <begin position="98"/>
        <end position="114"/>
    </location>
</feature>
<feature type="transmembrane region" description="Helical" evidence="2">
    <location>
        <begin position="115"/>
        <end position="135"/>
    </location>
</feature>
<feature type="topological domain" description="Extracellular" evidence="2">
    <location>
        <begin position="136"/>
        <end position="156"/>
    </location>
</feature>
<feature type="transmembrane region" description="Helical" evidence="2">
    <location>
        <begin position="157"/>
        <end position="177"/>
    </location>
</feature>
<feature type="topological domain" description="Cytoplasmic" evidence="2">
    <location>
        <begin position="178"/>
        <end position="188"/>
    </location>
</feature>
<feature type="region of interest" description="Disordered" evidence="3">
    <location>
        <begin position="1"/>
        <end position="21"/>
    </location>
</feature>
<feature type="glycosylation site" description="N-linked (GlcNAc...) asparagine" evidence="2">
    <location>
        <position position="154"/>
    </location>
</feature>
<accession>F2E5T1</accession>
<keyword id="KW-1003">Cell membrane</keyword>
<keyword id="KW-0325">Glycoprotein</keyword>
<keyword id="KW-0472">Membrane</keyword>
<keyword id="KW-1185">Reference proteome</keyword>
<keyword id="KW-0812">Transmembrane</keyword>
<keyword id="KW-1133">Transmembrane helix</keyword>
<dbReference type="EMBL" id="AK371505">
    <property type="protein sequence ID" value="BAK02703.1"/>
    <property type="molecule type" value="mRNA"/>
</dbReference>
<dbReference type="RefSeq" id="NP_001413747.1">
    <property type="nucleotide sequence ID" value="NM_001426818.1"/>
</dbReference>
<dbReference type="SMR" id="F2E5T1"/>
<dbReference type="STRING" id="112509.F2E5T1"/>
<dbReference type="PaxDb" id="4513-MLOC_54075.1"/>
<dbReference type="EnsemblPlants" id="HORVU.MOREX.r2.5HG0436720.1">
    <property type="protein sequence ID" value="HORVU.MOREX.r2.5HG0436720.1"/>
    <property type="gene ID" value="HORVU.MOREX.r2.5HG0436720"/>
</dbReference>
<dbReference type="EnsemblPlants" id="HORVU.MOREX.r3.5HG0525270.1">
    <property type="protein sequence ID" value="HORVU.MOREX.r3.5HG0525270.1"/>
    <property type="gene ID" value="HORVU.MOREX.r3.5HG0525270"/>
</dbReference>
<dbReference type="GeneID" id="123452991"/>
<dbReference type="Gramene" id="HORVU.MOREX.r2.5HG0436720.1">
    <property type="protein sequence ID" value="HORVU.MOREX.r2.5HG0436720.1"/>
    <property type="gene ID" value="HORVU.MOREX.r2.5HG0436720"/>
</dbReference>
<dbReference type="Gramene" id="HORVU.MOREX.r3.5HG0525270.1">
    <property type="protein sequence ID" value="HORVU.MOREX.r3.5HG0525270.1"/>
    <property type="gene ID" value="HORVU.MOREX.r3.5HG0525270"/>
</dbReference>
<dbReference type="eggNOG" id="ENOG502RYC3">
    <property type="taxonomic scope" value="Eukaryota"/>
</dbReference>
<dbReference type="HOGENOM" id="CLU_048961_4_1_1"/>
<dbReference type="InParanoid" id="F2E5T1"/>
<dbReference type="OrthoDB" id="1924823at2759"/>
<dbReference type="Proteomes" id="UP000011116">
    <property type="component" value="Chromosome 5H"/>
</dbReference>
<dbReference type="GO" id="GO:0005886">
    <property type="term" value="C:plasma membrane"/>
    <property type="evidence" value="ECO:0007669"/>
    <property type="project" value="UniProtKB-SubCell"/>
</dbReference>
<dbReference type="InterPro" id="IPR006702">
    <property type="entry name" value="CASP_dom"/>
</dbReference>
<dbReference type="PANTHER" id="PTHR33573">
    <property type="entry name" value="CASP-LIKE PROTEIN 4A4"/>
    <property type="match status" value="1"/>
</dbReference>
<dbReference type="PANTHER" id="PTHR33573:SF60">
    <property type="entry name" value="CASP-LIKE PROTEIN 4B3"/>
    <property type="match status" value="1"/>
</dbReference>
<dbReference type="Pfam" id="PF04535">
    <property type="entry name" value="CASP_dom"/>
    <property type="match status" value="1"/>
</dbReference>
<organism>
    <name type="scientific">Hordeum vulgare subsp. vulgare</name>
    <name type="common">Domesticated barley</name>
    <dbReference type="NCBI Taxonomy" id="112509"/>
    <lineage>
        <taxon>Eukaryota</taxon>
        <taxon>Viridiplantae</taxon>
        <taxon>Streptophyta</taxon>
        <taxon>Embryophyta</taxon>
        <taxon>Tracheophyta</taxon>
        <taxon>Spermatophyta</taxon>
        <taxon>Magnoliopsida</taxon>
        <taxon>Liliopsida</taxon>
        <taxon>Poales</taxon>
        <taxon>Poaceae</taxon>
        <taxon>BOP clade</taxon>
        <taxon>Pooideae</taxon>
        <taxon>Triticodae</taxon>
        <taxon>Triticeae</taxon>
        <taxon>Hordeinae</taxon>
        <taxon>Hordeum</taxon>
    </lineage>
</organism>
<evidence type="ECO:0000250" key="1"/>
<evidence type="ECO:0000255" key="2"/>
<evidence type="ECO:0000256" key="3">
    <source>
        <dbReference type="SAM" id="MobiDB-lite"/>
    </source>
</evidence>
<evidence type="ECO:0000305" key="4"/>
<comment type="subunit">
    <text evidence="1">Homodimer and heterodimers.</text>
</comment>
<comment type="subcellular location">
    <subcellularLocation>
        <location evidence="1">Cell membrane</location>
        <topology evidence="1">Multi-pass membrane protein</topology>
    </subcellularLocation>
</comment>
<comment type="similarity">
    <text evidence="4">Belongs to the Casparian strip membrane proteins (CASP) family.</text>
</comment>
<proteinExistence type="evidence at transcript level"/>
<reference key="1">
    <citation type="journal article" date="2011" name="Plant Physiol.">
        <title>Comprehensive sequence analysis of 24,783 barley full-length cDNAs derived from 12 clone libraries.</title>
        <authorList>
            <person name="Matsumoto T."/>
            <person name="Tanaka T."/>
            <person name="Sakai H."/>
            <person name="Amano N."/>
            <person name="Kanamori H."/>
            <person name="Kurita K."/>
            <person name="Kikuta A."/>
            <person name="Kamiya K."/>
            <person name="Yamamoto M."/>
            <person name="Ikawa H."/>
            <person name="Fujii N."/>
            <person name="Hori K."/>
            <person name="Itoh T."/>
            <person name="Sato K."/>
        </authorList>
    </citation>
    <scope>NUCLEOTIDE SEQUENCE [LARGE SCALE MRNA]</scope>
    <source>
        <strain>cv. Haruna Nijo</strain>
        <tissue>Seedling root</tissue>
        <tissue>Seedling shoot</tissue>
    </source>
</reference>
<reference key="2">
    <citation type="journal article" date="2014" name="Plant Physiol.">
        <title>Functional and evolutionary analysis of the CASPARIAN STRIP MEMBRANE DOMAIN PROTEIN family.</title>
        <authorList>
            <person name="Roppolo D."/>
            <person name="Boeckmann B."/>
            <person name="Pfister A."/>
            <person name="Boutet E."/>
            <person name="Rubio M.C."/>
            <person name="Denervaud-Tendon V."/>
            <person name="Vermeer J.E."/>
            <person name="Gheyselinck J."/>
            <person name="Xenarios I."/>
            <person name="Geldner N."/>
        </authorList>
    </citation>
    <scope>GENE FAMILY</scope>
    <scope>NOMENCLATURE</scope>
</reference>
<name>CSPL1_HORVV</name>
<protein>
    <recommendedName>
        <fullName>CASP-like protein 4B3</fullName>
        <shortName>HvCASPL4B3</shortName>
    </recommendedName>
</protein>